<reference key="1">
    <citation type="journal article" date="2003" name="DNA Res.">
        <title>Complete sequence and analysis of the plastid genome of the unicellular red alga Cyanidioschyzon merolae.</title>
        <authorList>
            <person name="Ohta N."/>
            <person name="Matsuzaki M."/>
            <person name="Misumi O."/>
            <person name="Miyagishima S.-Y."/>
            <person name="Nozaki H."/>
            <person name="Tanaka K."/>
            <person name="Shin-i T."/>
            <person name="Kohara Y."/>
            <person name="Kuroiwa T."/>
        </authorList>
    </citation>
    <scope>NUCLEOTIDE SEQUENCE [LARGE SCALE GENOMIC DNA]</scope>
    <source>
        <strain>NIES-3377 / 10D</strain>
    </source>
</reference>
<geneLocation type="chloroplast"/>
<name>CYC6_CYAM1</name>
<comment type="function">
    <text evidence="1">Functions as an electron carrier between membrane-bound cytochrome b6-f and photosystem I in oxygenic photosynthesis.</text>
</comment>
<comment type="subunit">
    <text evidence="1">Monomer.</text>
</comment>
<comment type="subcellular location">
    <subcellularLocation>
        <location evidence="1">Plastid</location>
        <location evidence="1">Chloroplast thylakoid lumen</location>
    </subcellularLocation>
</comment>
<comment type="PTM">
    <text evidence="1">Binds 1 heme c group covalently per subunit.</text>
</comment>
<comment type="similarity">
    <text evidence="1">Belongs to the cytochrome c family. PetJ subfamily.</text>
</comment>
<dbReference type="EMBL" id="AB002583">
    <property type="protein sequence ID" value="BAC76273.1"/>
    <property type="molecule type" value="Genomic_DNA"/>
</dbReference>
<dbReference type="RefSeq" id="NP_849111.1">
    <property type="nucleotide sequence ID" value="NC_004799.1"/>
</dbReference>
<dbReference type="SMR" id="Q85FS2"/>
<dbReference type="STRING" id="280699.Q85FS2"/>
<dbReference type="EnsemblPlants" id="CMV209CT">
    <property type="protein sequence ID" value="CMV209CT"/>
    <property type="gene ID" value="CMV209C"/>
</dbReference>
<dbReference type="GeneID" id="844930"/>
<dbReference type="Gramene" id="CMV209CT">
    <property type="protein sequence ID" value="CMV209CT"/>
    <property type="gene ID" value="CMV209C"/>
</dbReference>
<dbReference type="KEGG" id="cme:CymeCp179"/>
<dbReference type="eggNOG" id="ENOG502SB8G">
    <property type="taxonomic scope" value="Eukaryota"/>
</dbReference>
<dbReference type="HOGENOM" id="CLU_101159_1_0_1"/>
<dbReference type="Proteomes" id="UP000007014">
    <property type="component" value="Chloroplast"/>
</dbReference>
<dbReference type="GO" id="GO:0009543">
    <property type="term" value="C:chloroplast thylakoid lumen"/>
    <property type="evidence" value="ECO:0007669"/>
    <property type="project" value="UniProtKB-SubCell"/>
</dbReference>
<dbReference type="GO" id="GO:0009055">
    <property type="term" value="F:electron transfer activity"/>
    <property type="evidence" value="ECO:0007669"/>
    <property type="project" value="UniProtKB-UniRule"/>
</dbReference>
<dbReference type="GO" id="GO:0020037">
    <property type="term" value="F:heme binding"/>
    <property type="evidence" value="ECO:0007669"/>
    <property type="project" value="InterPro"/>
</dbReference>
<dbReference type="GO" id="GO:0005506">
    <property type="term" value="F:iron ion binding"/>
    <property type="evidence" value="ECO:0007669"/>
    <property type="project" value="InterPro"/>
</dbReference>
<dbReference type="GO" id="GO:0015979">
    <property type="term" value="P:photosynthesis"/>
    <property type="evidence" value="ECO:0007669"/>
    <property type="project" value="UniProtKB-UniRule"/>
</dbReference>
<dbReference type="FunFam" id="1.10.760.10:FF:000038">
    <property type="entry name" value="Cytochrome c6"/>
    <property type="match status" value="1"/>
</dbReference>
<dbReference type="Gene3D" id="1.10.760.10">
    <property type="entry name" value="Cytochrome c-like domain"/>
    <property type="match status" value="1"/>
</dbReference>
<dbReference type="HAMAP" id="MF_00594">
    <property type="entry name" value="Cytc_PetJ"/>
    <property type="match status" value="1"/>
</dbReference>
<dbReference type="InterPro" id="IPR009056">
    <property type="entry name" value="Cyt_c-like_dom"/>
</dbReference>
<dbReference type="InterPro" id="IPR036909">
    <property type="entry name" value="Cyt_c-like_dom_sf"/>
</dbReference>
<dbReference type="InterPro" id="IPR023655">
    <property type="entry name" value="Cyt_C6"/>
</dbReference>
<dbReference type="InterPro" id="IPR008168">
    <property type="entry name" value="Cyt_C_IC"/>
</dbReference>
<dbReference type="NCBIfam" id="NF045930">
    <property type="entry name" value="Cytc6PetJCyano"/>
    <property type="match status" value="1"/>
</dbReference>
<dbReference type="PANTHER" id="PTHR34688">
    <property type="entry name" value="CYTOCHROME C6, CHLOROPLASTIC"/>
    <property type="match status" value="1"/>
</dbReference>
<dbReference type="PANTHER" id="PTHR34688:SF2">
    <property type="entry name" value="CYTOCHROME C6, CHLOROPLASTIC"/>
    <property type="match status" value="1"/>
</dbReference>
<dbReference type="Pfam" id="PF13442">
    <property type="entry name" value="Cytochrome_CBB3"/>
    <property type="match status" value="1"/>
</dbReference>
<dbReference type="PRINTS" id="PR00605">
    <property type="entry name" value="CYTCHROMECIC"/>
</dbReference>
<dbReference type="SUPFAM" id="SSF46626">
    <property type="entry name" value="Cytochrome c"/>
    <property type="match status" value="1"/>
</dbReference>
<dbReference type="PROSITE" id="PS51007">
    <property type="entry name" value="CYTC"/>
    <property type="match status" value="1"/>
</dbReference>
<accession>Q85FS2</accession>
<protein>
    <recommendedName>
        <fullName evidence="1">Cytochrome c6</fullName>
    </recommendedName>
    <alternativeName>
        <fullName evidence="1">Cytochrome c-553</fullName>
    </alternativeName>
    <alternativeName>
        <fullName evidence="1">Cytochrome c553</fullName>
    </alternativeName>
    <alternativeName>
        <fullName evidence="1">Soluble cytochrome f</fullName>
    </alternativeName>
</protein>
<keyword id="KW-0150">Chloroplast</keyword>
<keyword id="KW-0249">Electron transport</keyword>
<keyword id="KW-0349">Heme</keyword>
<keyword id="KW-0408">Iron</keyword>
<keyword id="KW-0479">Metal-binding</keyword>
<keyword id="KW-0602">Photosynthesis</keyword>
<keyword id="KW-0934">Plastid</keyword>
<keyword id="KW-1185">Reference proteome</keyword>
<keyword id="KW-0732">Signal</keyword>
<keyword id="KW-0793">Thylakoid</keyword>
<keyword id="KW-0813">Transport</keyword>
<gene>
    <name evidence="1" type="primary">petJ</name>
</gene>
<feature type="signal peptide" evidence="1">
    <location>
        <begin position="1"/>
        <end position="20"/>
    </location>
</feature>
<feature type="chain" id="PRO_0000275346" description="Cytochrome c6">
    <location>
        <begin position="21"/>
        <end position="104"/>
    </location>
</feature>
<feature type="binding site" description="covalent" evidence="1">
    <location>
        <position position="34"/>
    </location>
    <ligand>
        <name>heme c</name>
        <dbReference type="ChEBI" id="CHEBI:61717"/>
    </ligand>
</feature>
<feature type="binding site" description="covalent" evidence="1">
    <location>
        <position position="37"/>
    </location>
    <ligand>
        <name>heme c</name>
        <dbReference type="ChEBI" id="CHEBI:61717"/>
    </ligand>
</feature>
<feature type="binding site" description="axial binding residue" evidence="1">
    <location>
        <position position="38"/>
    </location>
    <ligand>
        <name>heme c</name>
        <dbReference type="ChEBI" id="CHEBI:61717"/>
    </ligand>
    <ligandPart>
        <name>Fe</name>
        <dbReference type="ChEBI" id="CHEBI:18248"/>
    </ligandPart>
</feature>
<feature type="binding site" description="axial binding residue" evidence="1">
    <location>
        <position position="78"/>
    </location>
    <ligand>
        <name>heme c</name>
        <dbReference type="ChEBI" id="CHEBI:61717"/>
    </ligand>
    <ligandPart>
        <name>Fe</name>
        <dbReference type="ChEBI" id="CHEBI:18248"/>
    </ligandPart>
</feature>
<evidence type="ECO:0000255" key="1">
    <source>
        <dbReference type="HAMAP-Rule" id="MF_00594"/>
    </source>
</evidence>
<sequence>MKSLLTFILTTIFCIQQVWAADLAHGEQIFSANCAACHAGGNNVIMPEKTLKLDALEANQMNSVEAISTQVRNGKNAMPSFSRLTDSDIEDVANYVLAQAKKGW</sequence>
<organism>
    <name type="scientific">Cyanidioschyzon merolae (strain NIES-3377 / 10D)</name>
    <name type="common">Unicellular red alga</name>
    <dbReference type="NCBI Taxonomy" id="280699"/>
    <lineage>
        <taxon>Eukaryota</taxon>
        <taxon>Rhodophyta</taxon>
        <taxon>Bangiophyceae</taxon>
        <taxon>Cyanidiales</taxon>
        <taxon>Cyanidiaceae</taxon>
        <taxon>Cyanidioschyzon</taxon>
    </lineage>
</organism>
<proteinExistence type="inferred from homology"/>